<comment type="function">
    <text evidence="1">Specifically methylates position 2 of adenine 2503 in 23S rRNA and position 2 of adenine 37 in tRNAs.</text>
</comment>
<comment type="catalytic activity">
    <reaction evidence="1">
        <text>adenosine(2503) in 23S rRNA + 2 reduced [2Fe-2S]-[ferredoxin] + 2 S-adenosyl-L-methionine = 2-methyladenosine(2503) in 23S rRNA + 5'-deoxyadenosine + L-methionine + 2 oxidized [2Fe-2S]-[ferredoxin] + S-adenosyl-L-homocysteine</text>
        <dbReference type="Rhea" id="RHEA:42916"/>
        <dbReference type="Rhea" id="RHEA-COMP:10000"/>
        <dbReference type="Rhea" id="RHEA-COMP:10001"/>
        <dbReference type="Rhea" id="RHEA-COMP:10152"/>
        <dbReference type="Rhea" id="RHEA-COMP:10282"/>
        <dbReference type="ChEBI" id="CHEBI:17319"/>
        <dbReference type="ChEBI" id="CHEBI:33737"/>
        <dbReference type="ChEBI" id="CHEBI:33738"/>
        <dbReference type="ChEBI" id="CHEBI:57844"/>
        <dbReference type="ChEBI" id="CHEBI:57856"/>
        <dbReference type="ChEBI" id="CHEBI:59789"/>
        <dbReference type="ChEBI" id="CHEBI:74411"/>
        <dbReference type="ChEBI" id="CHEBI:74497"/>
        <dbReference type="EC" id="2.1.1.192"/>
    </reaction>
</comment>
<comment type="catalytic activity">
    <reaction evidence="1">
        <text>adenosine(37) in tRNA + 2 reduced [2Fe-2S]-[ferredoxin] + 2 S-adenosyl-L-methionine = 2-methyladenosine(37) in tRNA + 5'-deoxyadenosine + L-methionine + 2 oxidized [2Fe-2S]-[ferredoxin] + S-adenosyl-L-homocysteine</text>
        <dbReference type="Rhea" id="RHEA:43332"/>
        <dbReference type="Rhea" id="RHEA-COMP:10000"/>
        <dbReference type="Rhea" id="RHEA-COMP:10001"/>
        <dbReference type="Rhea" id="RHEA-COMP:10162"/>
        <dbReference type="Rhea" id="RHEA-COMP:10485"/>
        <dbReference type="ChEBI" id="CHEBI:17319"/>
        <dbReference type="ChEBI" id="CHEBI:33737"/>
        <dbReference type="ChEBI" id="CHEBI:33738"/>
        <dbReference type="ChEBI" id="CHEBI:57844"/>
        <dbReference type="ChEBI" id="CHEBI:57856"/>
        <dbReference type="ChEBI" id="CHEBI:59789"/>
        <dbReference type="ChEBI" id="CHEBI:74411"/>
        <dbReference type="ChEBI" id="CHEBI:74497"/>
        <dbReference type="EC" id="2.1.1.192"/>
    </reaction>
</comment>
<comment type="cofactor">
    <cofactor evidence="1">
        <name>[4Fe-4S] cluster</name>
        <dbReference type="ChEBI" id="CHEBI:49883"/>
    </cofactor>
    <text evidence="1">Binds 1 [4Fe-4S] cluster. The cluster is coordinated with 3 cysteines and an exchangeable S-adenosyl-L-methionine.</text>
</comment>
<comment type="subcellular location">
    <subcellularLocation>
        <location evidence="1">Cytoplasm</location>
    </subcellularLocation>
</comment>
<comment type="miscellaneous">
    <text evidence="1">Reaction proceeds by a ping-pong mechanism involving intermediate methylation of a conserved cysteine residue.</text>
</comment>
<comment type="similarity">
    <text evidence="1">Belongs to the radical SAM superfamily. RlmN family.</text>
</comment>
<sequence>MTSLPLTPVNLDAPARRAAMPPRHLADLDLAGRQALVAELGEPRFRARQVSTHYFGRLVRDSGQMTDLPAAAREKLTDRLLPTLLTPVRELTCDDGATHKALWRLHDGSLVESVLMGYPDRVTACLSSQAGCGMACPFCATGQAGLTRNLSTAEIVDQAVYLAGVAASGAVAGSPPRLSRVVFMGMGEPLANYNRVVAAIRRLVAPAPEGLGLSQRHVTVSTVGLVPAIRRLASEDLSVTLALSLHAPDDGLRDELVPVNQRWKVSEVLETAWEYAARTGRRVSIEYAMIKDVNDQPWRADLLGRLLAGKLAHVNLIPLNPTPGSRWDASPKPVEREFVRRLRDAGVSTTVRDTRGREIDGACGQLAAAEGDEIVGPGAP</sequence>
<proteinExistence type="inferred from homology"/>
<gene>
    <name evidence="1" type="primary">rlmN</name>
    <name type="ordered locus">Sare_1235</name>
</gene>
<keyword id="KW-0004">4Fe-4S</keyword>
<keyword id="KW-0963">Cytoplasm</keyword>
<keyword id="KW-1015">Disulfide bond</keyword>
<keyword id="KW-0408">Iron</keyword>
<keyword id="KW-0411">Iron-sulfur</keyword>
<keyword id="KW-0479">Metal-binding</keyword>
<keyword id="KW-0489">Methyltransferase</keyword>
<keyword id="KW-0698">rRNA processing</keyword>
<keyword id="KW-0949">S-adenosyl-L-methionine</keyword>
<keyword id="KW-0808">Transferase</keyword>
<keyword id="KW-0819">tRNA processing</keyword>
<dbReference type="EC" id="2.1.1.192" evidence="1"/>
<dbReference type="EMBL" id="CP000850">
    <property type="protein sequence ID" value="ABV97141.1"/>
    <property type="molecule type" value="Genomic_DNA"/>
</dbReference>
<dbReference type="SMR" id="A8M6B6"/>
<dbReference type="STRING" id="391037.Sare_1235"/>
<dbReference type="KEGG" id="saq:Sare_1235"/>
<dbReference type="PATRIC" id="fig|391037.6.peg.1252"/>
<dbReference type="eggNOG" id="COG0820">
    <property type="taxonomic scope" value="Bacteria"/>
</dbReference>
<dbReference type="HOGENOM" id="CLU_029101_0_2_11"/>
<dbReference type="OrthoDB" id="9793973at2"/>
<dbReference type="GO" id="GO:0005737">
    <property type="term" value="C:cytoplasm"/>
    <property type="evidence" value="ECO:0007669"/>
    <property type="project" value="UniProtKB-SubCell"/>
</dbReference>
<dbReference type="GO" id="GO:0051539">
    <property type="term" value="F:4 iron, 4 sulfur cluster binding"/>
    <property type="evidence" value="ECO:0007669"/>
    <property type="project" value="UniProtKB-UniRule"/>
</dbReference>
<dbReference type="GO" id="GO:0046872">
    <property type="term" value="F:metal ion binding"/>
    <property type="evidence" value="ECO:0007669"/>
    <property type="project" value="UniProtKB-KW"/>
</dbReference>
<dbReference type="GO" id="GO:0070040">
    <property type="term" value="F:rRNA (adenine(2503)-C2-)-methyltransferase activity"/>
    <property type="evidence" value="ECO:0007669"/>
    <property type="project" value="UniProtKB-UniRule"/>
</dbReference>
<dbReference type="GO" id="GO:0019843">
    <property type="term" value="F:rRNA binding"/>
    <property type="evidence" value="ECO:0007669"/>
    <property type="project" value="UniProtKB-UniRule"/>
</dbReference>
<dbReference type="GO" id="GO:0002935">
    <property type="term" value="F:tRNA (adenine(37)-C2)-methyltransferase activity"/>
    <property type="evidence" value="ECO:0007669"/>
    <property type="project" value="UniProtKB-UniRule"/>
</dbReference>
<dbReference type="GO" id="GO:0000049">
    <property type="term" value="F:tRNA binding"/>
    <property type="evidence" value="ECO:0007669"/>
    <property type="project" value="UniProtKB-UniRule"/>
</dbReference>
<dbReference type="GO" id="GO:0070475">
    <property type="term" value="P:rRNA base methylation"/>
    <property type="evidence" value="ECO:0007669"/>
    <property type="project" value="UniProtKB-UniRule"/>
</dbReference>
<dbReference type="GO" id="GO:0030488">
    <property type="term" value="P:tRNA methylation"/>
    <property type="evidence" value="ECO:0007669"/>
    <property type="project" value="UniProtKB-UniRule"/>
</dbReference>
<dbReference type="CDD" id="cd01335">
    <property type="entry name" value="Radical_SAM"/>
    <property type="match status" value="1"/>
</dbReference>
<dbReference type="FunFam" id="3.20.20.70:FF:000014">
    <property type="entry name" value="Probable dual-specificity RNA methyltransferase RlmN"/>
    <property type="match status" value="1"/>
</dbReference>
<dbReference type="Gene3D" id="1.10.150.530">
    <property type="match status" value="1"/>
</dbReference>
<dbReference type="Gene3D" id="3.20.20.70">
    <property type="entry name" value="Aldolase class I"/>
    <property type="match status" value="1"/>
</dbReference>
<dbReference type="HAMAP" id="MF_01849">
    <property type="entry name" value="RNA_methyltr_RlmN"/>
    <property type="match status" value="1"/>
</dbReference>
<dbReference type="InterPro" id="IPR013785">
    <property type="entry name" value="Aldolase_TIM"/>
</dbReference>
<dbReference type="InterPro" id="IPR040072">
    <property type="entry name" value="Methyltransferase_A"/>
</dbReference>
<dbReference type="InterPro" id="IPR048641">
    <property type="entry name" value="RlmN_N"/>
</dbReference>
<dbReference type="InterPro" id="IPR027492">
    <property type="entry name" value="RNA_MTrfase_RlmN"/>
</dbReference>
<dbReference type="InterPro" id="IPR004383">
    <property type="entry name" value="rRNA_lsu_MTrfase_RlmN/Cfr"/>
</dbReference>
<dbReference type="InterPro" id="IPR007197">
    <property type="entry name" value="rSAM"/>
</dbReference>
<dbReference type="NCBIfam" id="TIGR00048">
    <property type="entry name" value="rRNA_mod_RlmN"/>
    <property type="match status" value="1"/>
</dbReference>
<dbReference type="PANTHER" id="PTHR30544">
    <property type="entry name" value="23S RRNA METHYLTRANSFERASE"/>
    <property type="match status" value="1"/>
</dbReference>
<dbReference type="PANTHER" id="PTHR30544:SF5">
    <property type="entry name" value="RADICAL SAM CORE DOMAIN-CONTAINING PROTEIN"/>
    <property type="match status" value="1"/>
</dbReference>
<dbReference type="Pfam" id="PF04055">
    <property type="entry name" value="Radical_SAM"/>
    <property type="match status" value="1"/>
</dbReference>
<dbReference type="Pfam" id="PF21016">
    <property type="entry name" value="RlmN_N"/>
    <property type="match status" value="1"/>
</dbReference>
<dbReference type="PIRSF" id="PIRSF006004">
    <property type="entry name" value="CHP00048"/>
    <property type="match status" value="1"/>
</dbReference>
<dbReference type="SFLD" id="SFLDF00275">
    <property type="entry name" value="adenosine_C2_methyltransferase"/>
    <property type="match status" value="1"/>
</dbReference>
<dbReference type="SFLD" id="SFLDS00029">
    <property type="entry name" value="Radical_SAM"/>
    <property type="match status" value="1"/>
</dbReference>
<dbReference type="SUPFAM" id="SSF102114">
    <property type="entry name" value="Radical SAM enzymes"/>
    <property type="match status" value="1"/>
</dbReference>
<dbReference type="PROSITE" id="PS51918">
    <property type="entry name" value="RADICAL_SAM"/>
    <property type="match status" value="1"/>
</dbReference>
<protein>
    <recommendedName>
        <fullName evidence="1">Probable dual-specificity RNA methyltransferase RlmN</fullName>
        <ecNumber evidence="1">2.1.1.192</ecNumber>
    </recommendedName>
    <alternativeName>
        <fullName evidence="1">23S rRNA (adenine(2503)-C(2))-methyltransferase</fullName>
    </alternativeName>
    <alternativeName>
        <fullName evidence="1">23S rRNA m2A2503 methyltransferase</fullName>
    </alternativeName>
    <alternativeName>
        <fullName evidence="1">Ribosomal RNA large subunit methyltransferase N</fullName>
    </alternativeName>
    <alternativeName>
        <fullName evidence="1">tRNA (adenine(37)-C(2))-methyltransferase</fullName>
    </alternativeName>
    <alternativeName>
        <fullName evidence="1">tRNA m2A37 methyltransferase</fullName>
    </alternativeName>
</protein>
<name>RLMN_SALAI</name>
<organism>
    <name type="scientific">Salinispora arenicola (strain CNS-205)</name>
    <dbReference type="NCBI Taxonomy" id="391037"/>
    <lineage>
        <taxon>Bacteria</taxon>
        <taxon>Bacillati</taxon>
        <taxon>Actinomycetota</taxon>
        <taxon>Actinomycetes</taxon>
        <taxon>Micromonosporales</taxon>
        <taxon>Micromonosporaceae</taxon>
        <taxon>Salinispora</taxon>
    </lineage>
</organism>
<feature type="chain" id="PRO_0000350383" description="Probable dual-specificity RNA methyltransferase RlmN">
    <location>
        <begin position="1"/>
        <end position="380"/>
    </location>
</feature>
<feature type="domain" description="Radical SAM core" evidence="2">
    <location>
        <begin position="118"/>
        <end position="358"/>
    </location>
</feature>
<feature type="active site" description="Proton acceptor" evidence="1">
    <location>
        <position position="112"/>
    </location>
</feature>
<feature type="active site" description="S-methylcysteine intermediate" evidence="1">
    <location>
        <position position="363"/>
    </location>
</feature>
<feature type="binding site" evidence="1">
    <location>
        <position position="132"/>
    </location>
    <ligand>
        <name>[4Fe-4S] cluster</name>
        <dbReference type="ChEBI" id="CHEBI:49883"/>
        <note>4Fe-4S-S-AdoMet</note>
    </ligand>
</feature>
<feature type="binding site" evidence="1">
    <location>
        <position position="136"/>
    </location>
    <ligand>
        <name>[4Fe-4S] cluster</name>
        <dbReference type="ChEBI" id="CHEBI:49883"/>
        <note>4Fe-4S-S-AdoMet</note>
    </ligand>
</feature>
<feature type="binding site" evidence="1">
    <location>
        <position position="139"/>
    </location>
    <ligand>
        <name>[4Fe-4S] cluster</name>
        <dbReference type="ChEBI" id="CHEBI:49883"/>
        <note>4Fe-4S-S-AdoMet</note>
    </ligand>
</feature>
<feature type="binding site" evidence="1">
    <location>
        <begin position="187"/>
        <end position="188"/>
    </location>
    <ligand>
        <name>S-adenosyl-L-methionine</name>
        <dbReference type="ChEBI" id="CHEBI:59789"/>
    </ligand>
</feature>
<feature type="binding site" evidence="1">
    <location>
        <position position="221"/>
    </location>
    <ligand>
        <name>S-adenosyl-L-methionine</name>
        <dbReference type="ChEBI" id="CHEBI:59789"/>
    </ligand>
</feature>
<feature type="binding site" evidence="1">
    <location>
        <begin position="244"/>
        <end position="246"/>
    </location>
    <ligand>
        <name>S-adenosyl-L-methionine</name>
        <dbReference type="ChEBI" id="CHEBI:59789"/>
    </ligand>
</feature>
<feature type="binding site" evidence="1">
    <location>
        <position position="320"/>
    </location>
    <ligand>
        <name>S-adenosyl-L-methionine</name>
        <dbReference type="ChEBI" id="CHEBI:59789"/>
    </ligand>
</feature>
<feature type="disulfide bond" description="(transient)" evidence="1">
    <location>
        <begin position="125"/>
        <end position="363"/>
    </location>
</feature>
<evidence type="ECO:0000255" key="1">
    <source>
        <dbReference type="HAMAP-Rule" id="MF_01849"/>
    </source>
</evidence>
<evidence type="ECO:0000255" key="2">
    <source>
        <dbReference type="PROSITE-ProRule" id="PRU01266"/>
    </source>
</evidence>
<accession>A8M6B6</accession>
<reference key="1">
    <citation type="submission" date="2007-10" db="EMBL/GenBank/DDBJ databases">
        <title>Complete sequence of Salinispora arenicola CNS-205.</title>
        <authorList>
            <consortium name="US DOE Joint Genome Institute"/>
            <person name="Copeland A."/>
            <person name="Lucas S."/>
            <person name="Lapidus A."/>
            <person name="Barry K."/>
            <person name="Glavina del Rio T."/>
            <person name="Dalin E."/>
            <person name="Tice H."/>
            <person name="Pitluck S."/>
            <person name="Foster B."/>
            <person name="Schmutz J."/>
            <person name="Larimer F."/>
            <person name="Land M."/>
            <person name="Hauser L."/>
            <person name="Kyrpides N."/>
            <person name="Ivanova N."/>
            <person name="Jensen P.R."/>
            <person name="Moore B.S."/>
            <person name="Penn K."/>
            <person name="Jenkins C."/>
            <person name="Udwary D."/>
            <person name="Xiang L."/>
            <person name="Gontang E."/>
            <person name="Richardson P."/>
        </authorList>
    </citation>
    <scope>NUCLEOTIDE SEQUENCE [LARGE SCALE GENOMIC DNA]</scope>
    <source>
        <strain>CNS-205</strain>
    </source>
</reference>